<sequence length="572" mass="62451">MAFNFNWSPLMADASFYTRAQDLLTAALNKSPKPPIIVDDIIVTELNLGSIPPELEILEIGDLAEDRFRGIFKMSYSGDAFLTLKTRVQANPLNTYLLTRPSFATPRPLAAATPLTIPLQITLSDFKLSGFVILVFSKQKGITVVFRNDPLESLKVSSTFDSIPFVRDFLQKEIEAQLRILFMDELPAIIHRLSLRLWVPEYRAGEELQTQTASANGEGPGQDPLASPPQDPVDALGNALNESEIESLSLDSSVETHSLFSQKNLLRLAALTDSQRTLSLFTPSIREVVYRAWTSPSDQTDASGSVTSPFFPVLSRTQSQVGSMSSFPDSASMVSSQSRSSTPSHTFSGYGLSLGAGRHSKAHARKRKKRVVDLRRPKTTDDAPSVSDESSFTESTSAPSICSAPLPVLDEQTDDPVTPPLSPDNDLHLPAIPERHRMSISRPALRRENASEMIRDTAECKPSSNAVGQAIQEEDLSATPRAAVRAHGASVLEKGKQDPDSSAGSSRQLPSTILPFINDNPTGGVVDQALVERLAGEIARRMRDEKFMASNACGPFWDRHSQEESPPPAYGH</sequence>
<protein>
    <recommendedName>
        <fullName evidence="1">Mitochondrial distribution and morphology protein 34</fullName>
    </recommendedName>
</protein>
<keyword id="KW-0445">Lipid transport</keyword>
<keyword id="KW-0446">Lipid-binding</keyword>
<keyword id="KW-0472">Membrane</keyword>
<keyword id="KW-0496">Mitochondrion</keyword>
<keyword id="KW-1000">Mitochondrion outer membrane</keyword>
<keyword id="KW-0812">Transmembrane</keyword>
<keyword id="KW-1134">Transmembrane beta strand</keyword>
<keyword id="KW-0813">Transport</keyword>
<accession>B0Y6I4</accession>
<organism>
    <name type="scientific">Aspergillus fumigatus (strain CBS 144.89 / FGSC A1163 / CEA10)</name>
    <name type="common">Neosartorya fumigata</name>
    <dbReference type="NCBI Taxonomy" id="451804"/>
    <lineage>
        <taxon>Eukaryota</taxon>
        <taxon>Fungi</taxon>
        <taxon>Dikarya</taxon>
        <taxon>Ascomycota</taxon>
        <taxon>Pezizomycotina</taxon>
        <taxon>Eurotiomycetes</taxon>
        <taxon>Eurotiomycetidae</taxon>
        <taxon>Eurotiales</taxon>
        <taxon>Aspergillaceae</taxon>
        <taxon>Aspergillus</taxon>
        <taxon>Aspergillus subgen. Fumigati</taxon>
    </lineage>
</organism>
<dbReference type="EMBL" id="DS499598">
    <property type="protein sequence ID" value="EDP50369.1"/>
    <property type="molecule type" value="Genomic_DNA"/>
</dbReference>
<dbReference type="SMR" id="B0Y6I4"/>
<dbReference type="EnsemblFungi" id="EDP50369">
    <property type="protein sequence ID" value="EDP50369"/>
    <property type="gene ID" value="AFUB_067070"/>
</dbReference>
<dbReference type="VEuPathDB" id="FungiDB:AFUB_067070"/>
<dbReference type="HOGENOM" id="CLU_036502_1_0_1"/>
<dbReference type="OrthoDB" id="100574at5052"/>
<dbReference type="PhylomeDB" id="B0Y6I4"/>
<dbReference type="Proteomes" id="UP000001699">
    <property type="component" value="Unassembled WGS sequence"/>
</dbReference>
<dbReference type="GO" id="GO:0032865">
    <property type="term" value="C:ERMES complex"/>
    <property type="evidence" value="ECO:0007669"/>
    <property type="project" value="UniProtKB-UniRule"/>
</dbReference>
<dbReference type="GO" id="GO:0008289">
    <property type="term" value="F:lipid binding"/>
    <property type="evidence" value="ECO:0007669"/>
    <property type="project" value="UniProtKB-KW"/>
</dbReference>
<dbReference type="GO" id="GO:0000002">
    <property type="term" value="P:mitochondrial genome maintenance"/>
    <property type="evidence" value="ECO:0007669"/>
    <property type="project" value="UniProtKB-UniRule"/>
</dbReference>
<dbReference type="GO" id="GO:1990456">
    <property type="term" value="P:mitochondrion-endoplasmic reticulum membrane tethering"/>
    <property type="evidence" value="ECO:0007669"/>
    <property type="project" value="TreeGrafter"/>
</dbReference>
<dbReference type="GO" id="GO:0015914">
    <property type="term" value="P:phospholipid transport"/>
    <property type="evidence" value="ECO:0007669"/>
    <property type="project" value="TreeGrafter"/>
</dbReference>
<dbReference type="CDD" id="cd21673">
    <property type="entry name" value="SMP_Mdm34"/>
    <property type="match status" value="1"/>
</dbReference>
<dbReference type="HAMAP" id="MF_03105">
    <property type="entry name" value="Mdm34"/>
    <property type="match status" value="1"/>
</dbReference>
<dbReference type="InterPro" id="IPR027536">
    <property type="entry name" value="Mdm34"/>
</dbReference>
<dbReference type="InterPro" id="IPR031468">
    <property type="entry name" value="SMP_LBD"/>
</dbReference>
<dbReference type="PANTHER" id="PTHR28185">
    <property type="entry name" value="MITOCHONDRIAL DISTRIBUTION AND MORPHOLOGY PROTEIN 34"/>
    <property type="match status" value="1"/>
</dbReference>
<dbReference type="PANTHER" id="PTHR28185:SF1">
    <property type="entry name" value="MITOCHONDRIAL DISTRIBUTION AND MORPHOLOGY PROTEIN 34"/>
    <property type="match status" value="1"/>
</dbReference>
<dbReference type="PROSITE" id="PS51847">
    <property type="entry name" value="SMP"/>
    <property type="match status" value="1"/>
</dbReference>
<proteinExistence type="inferred from homology"/>
<feature type="chain" id="PRO_0000384327" description="Mitochondrial distribution and morphology protein 34">
    <location>
        <begin position="1"/>
        <end position="572"/>
    </location>
</feature>
<feature type="domain" description="SMP-LTD" evidence="1">
    <location>
        <begin position="1"/>
        <end position="195"/>
    </location>
</feature>
<feature type="region of interest" description="Disordered" evidence="2">
    <location>
        <begin position="212"/>
        <end position="236"/>
    </location>
</feature>
<feature type="region of interest" description="Disordered" evidence="2">
    <location>
        <begin position="321"/>
        <end position="426"/>
    </location>
</feature>
<feature type="region of interest" description="Disordered" evidence="2">
    <location>
        <begin position="477"/>
        <end position="522"/>
    </location>
</feature>
<feature type="region of interest" description="Disordered" evidence="2">
    <location>
        <begin position="553"/>
        <end position="572"/>
    </location>
</feature>
<feature type="compositionally biased region" description="Low complexity" evidence="2">
    <location>
        <begin position="330"/>
        <end position="348"/>
    </location>
</feature>
<feature type="compositionally biased region" description="Basic residues" evidence="2">
    <location>
        <begin position="358"/>
        <end position="370"/>
    </location>
</feature>
<feature type="compositionally biased region" description="Basic and acidic residues" evidence="2">
    <location>
        <begin position="371"/>
        <end position="381"/>
    </location>
</feature>
<feature type="compositionally biased region" description="Polar residues" evidence="2">
    <location>
        <begin position="387"/>
        <end position="400"/>
    </location>
</feature>
<feature type="compositionally biased region" description="Polar residues" evidence="2">
    <location>
        <begin position="500"/>
        <end position="511"/>
    </location>
</feature>
<name>MDM34_ASPFC</name>
<evidence type="ECO:0000255" key="1">
    <source>
        <dbReference type="HAMAP-Rule" id="MF_03105"/>
    </source>
</evidence>
<evidence type="ECO:0000256" key="2">
    <source>
        <dbReference type="SAM" id="MobiDB-lite"/>
    </source>
</evidence>
<reference key="1">
    <citation type="journal article" date="2008" name="PLoS Genet.">
        <title>Genomic islands in the pathogenic filamentous fungus Aspergillus fumigatus.</title>
        <authorList>
            <person name="Fedorova N.D."/>
            <person name="Khaldi N."/>
            <person name="Joardar V.S."/>
            <person name="Maiti R."/>
            <person name="Amedeo P."/>
            <person name="Anderson M.J."/>
            <person name="Crabtree J."/>
            <person name="Silva J.C."/>
            <person name="Badger J.H."/>
            <person name="Albarraq A."/>
            <person name="Angiuoli S."/>
            <person name="Bussey H."/>
            <person name="Bowyer P."/>
            <person name="Cotty P.J."/>
            <person name="Dyer P.S."/>
            <person name="Egan A."/>
            <person name="Galens K."/>
            <person name="Fraser-Liggett C.M."/>
            <person name="Haas B.J."/>
            <person name="Inman J.M."/>
            <person name="Kent R."/>
            <person name="Lemieux S."/>
            <person name="Malavazi I."/>
            <person name="Orvis J."/>
            <person name="Roemer T."/>
            <person name="Ronning C.M."/>
            <person name="Sundaram J.P."/>
            <person name="Sutton G."/>
            <person name="Turner G."/>
            <person name="Venter J.C."/>
            <person name="White O.R."/>
            <person name="Whitty B.R."/>
            <person name="Youngman P."/>
            <person name="Wolfe K.H."/>
            <person name="Goldman G.H."/>
            <person name="Wortman J.R."/>
            <person name="Jiang B."/>
            <person name="Denning D.W."/>
            <person name="Nierman W.C."/>
        </authorList>
    </citation>
    <scope>NUCLEOTIDE SEQUENCE [LARGE SCALE GENOMIC DNA]</scope>
    <source>
        <strain>CBS 144.89 / FGSC A1163 / CEA10</strain>
    </source>
</reference>
<comment type="function">
    <text evidence="1">Component of the ERMES/MDM complex, which serves as a molecular tether to connect the endoplasmic reticulum (ER) and mitochondria. Components of this complex are involved in the control of mitochondrial shape and protein biogenesis, and function in nonvesicular lipid trafficking between the ER and mitochondria. Mdm34 is required for the interaction of the ER-resident membrane protein mmm1 and the outer mitochondrial membrane-resident beta-barrel protein mdm10.</text>
</comment>
<comment type="subunit">
    <text evidence="1">Component of the ER-mitochondria encounter structure (ERMES) or MDM complex, composed of mmm1, mdm10, mdm12 and mdm34.</text>
</comment>
<comment type="subcellular location">
    <subcellularLocation>
        <location evidence="1">Mitochondrion outer membrane</location>
        <topology evidence="1">Multi-pass membrane protein</topology>
    </subcellularLocation>
    <text evidence="1">The ERMES/MDM complex localizes to a few discrete foci (around 10 per single cell), that represent mitochondria-endoplasmic reticulum junctions. These foci are often found next to mtDNA nucleoids.</text>
</comment>
<comment type="domain">
    <text evidence="1">Lacks alpha-helical transmembrane segments, suggesting that it resides in the membrane via beta-sheet conformations similar to those predicted for other outer membrane proteins and porin.</text>
</comment>
<comment type="domain">
    <text evidence="1">The SMP-LTD domain is a barrel-like domain that can bind various types of glycerophospholipids in its interior and mediate their transfer between two adjacent bilayers.</text>
</comment>
<comment type="similarity">
    <text evidence="1">Belongs to the MDM34 family.</text>
</comment>
<gene>
    <name evidence="1" type="primary">mdm34</name>
    <name type="ORF">AFUB_067070</name>
</gene>